<geneLocation type="chloroplast"/>
<keyword id="KW-0148">Chlorophyll</keyword>
<keyword id="KW-0150">Chloroplast</keyword>
<keyword id="KW-0157">Chromophore</keyword>
<keyword id="KW-0472">Membrane</keyword>
<keyword id="KW-0602">Photosynthesis</keyword>
<keyword id="KW-0604">Photosystem II</keyword>
<keyword id="KW-0934">Plastid</keyword>
<keyword id="KW-0793">Thylakoid</keyword>
<keyword id="KW-0812">Transmembrane</keyword>
<keyword id="KW-1133">Transmembrane helix</keyword>
<name>PSBB_ACOCI</name>
<reference key="1">
    <citation type="submission" date="2007-11" db="EMBL/GenBank/DDBJ databases">
        <title>The complete chloroplast genome of Acorus americanus.</title>
        <authorList>
            <person name="Peery R.M."/>
            <person name="Chumley T.W."/>
            <person name="Kuehl J.V."/>
            <person name="Boore J.L."/>
            <person name="Raubeson L.A."/>
        </authorList>
    </citation>
    <scope>NUCLEOTIDE SEQUENCE [LARGE SCALE GENOMIC DNA]</scope>
</reference>
<gene>
    <name evidence="1" type="primary">psbB</name>
</gene>
<comment type="function">
    <text evidence="1">One of the components of the core complex of photosystem II (PSII). It binds chlorophyll and helps catalyze the primary light-induced photochemical processes of PSII. PSII is a light-driven water:plastoquinone oxidoreductase, using light energy to abstract electrons from H(2)O, generating O(2) and a proton gradient subsequently used for ATP formation.</text>
</comment>
<comment type="cofactor">
    <text evidence="1">Binds multiple chlorophylls. PSII binds additional chlorophylls, carotenoids and specific lipids.</text>
</comment>
<comment type="subunit">
    <text evidence="1">PSII is composed of 1 copy each of membrane proteins PsbA, PsbB, PsbC, PsbD, PsbE, PsbF, PsbH, PsbI, PsbJ, PsbK, PsbL, PsbM, PsbT, PsbX, PsbY, PsbZ, Psb30/Ycf12, at least 3 peripheral proteins of the oxygen-evolving complex and a large number of cofactors. It forms dimeric complexes.</text>
</comment>
<comment type="subcellular location">
    <subcellularLocation>
        <location evidence="1">Plastid</location>
        <location evidence="1">Chloroplast thylakoid membrane</location>
        <topology evidence="1">Multi-pass membrane protein</topology>
    </subcellularLocation>
</comment>
<comment type="similarity">
    <text evidence="1">Belongs to the PsbB/PsbC family. PsbB subfamily.</text>
</comment>
<feature type="chain" id="PRO_0000359789" description="Photosystem II CP47 reaction center protein">
    <location>
        <begin position="1"/>
        <end position="508"/>
    </location>
</feature>
<feature type="transmembrane region" description="Helical" evidence="1">
    <location>
        <begin position="21"/>
        <end position="36"/>
    </location>
</feature>
<feature type="transmembrane region" description="Helical" evidence="1">
    <location>
        <begin position="101"/>
        <end position="115"/>
    </location>
</feature>
<feature type="transmembrane region" description="Helical" evidence="1">
    <location>
        <begin position="140"/>
        <end position="156"/>
    </location>
</feature>
<feature type="transmembrane region" description="Helical" evidence="1">
    <location>
        <begin position="203"/>
        <end position="218"/>
    </location>
</feature>
<feature type="transmembrane region" description="Helical" evidence="1">
    <location>
        <begin position="237"/>
        <end position="252"/>
    </location>
</feature>
<feature type="transmembrane region" description="Helical" evidence="1">
    <location>
        <begin position="457"/>
        <end position="472"/>
    </location>
</feature>
<sequence>MGLPWYRVHTVVLNDPGRLLSVHIMHTALVAGWAGSMALYELAVFDPSDPVLDPMWRQGMFVIPFMTRLGITNSWGGWSITGGTITNPGIWSYEGVAGAHIVFSGLCFLAAIWHWVYWDLEIFCDERTGKPSLDLPKIFGIHLFLSGVACFGFGAFHVTGLYGPGIWVSDPYGLTGKVQPVNPAWGAEGFDPFVPGGIASHHIAAGTLGILAGLFHLSVRPPQRLYKGLRMGNIETVLSSSIAAVFFAAFVVAGTMWYGSATTPIELFGPTRYQWDQGYFQQEIYRRVGAGLAENLSLSEAWSKIPEKLAFYDYIGNNPAKGGLFRAGSMDNGDGIAVGWLGHPVFRDKEGRELFVRRMPTFFETFPVVLVDGDGIVRADVPFRRAESKYSVEQVGVTVEFYGGELNGVSYSDPATVKKYARRAQLGEIFELDRATLKSDGVFRSSPRGWFTFGHASFALLFFFGHIWHGARTLFRDVFAGIDPDLDAQVEFGAFQKIGDPTTRRQAV</sequence>
<proteinExistence type="inferred from homology"/>
<dbReference type="EMBL" id="EU273602">
    <property type="protein sequence ID" value="ABX38769.1"/>
    <property type="molecule type" value="Genomic_DNA"/>
</dbReference>
<dbReference type="RefSeq" id="YP_001586207.1">
    <property type="nucleotide sequence ID" value="NC_010093.1"/>
</dbReference>
<dbReference type="SMR" id="A9LYC6"/>
<dbReference type="GeneID" id="5777760"/>
<dbReference type="GO" id="GO:0009535">
    <property type="term" value="C:chloroplast thylakoid membrane"/>
    <property type="evidence" value="ECO:0007669"/>
    <property type="project" value="UniProtKB-SubCell"/>
</dbReference>
<dbReference type="GO" id="GO:0009523">
    <property type="term" value="C:photosystem II"/>
    <property type="evidence" value="ECO:0007669"/>
    <property type="project" value="UniProtKB-KW"/>
</dbReference>
<dbReference type="GO" id="GO:0016168">
    <property type="term" value="F:chlorophyll binding"/>
    <property type="evidence" value="ECO:0007669"/>
    <property type="project" value="UniProtKB-UniRule"/>
</dbReference>
<dbReference type="GO" id="GO:0045156">
    <property type="term" value="F:electron transporter, transferring electrons within the cyclic electron transport pathway of photosynthesis activity"/>
    <property type="evidence" value="ECO:0007669"/>
    <property type="project" value="InterPro"/>
</dbReference>
<dbReference type="GO" id="GO:0009772">
    <property type="term" value="P:photosynthetic electron transport in photosystem II"/>
    <property type="evidence" value="ECO:0007669"/>
    <property type="project" value="InterPro"/>
</dbReference>
<dbReference type="FunFam" id="3.10.680.10:FF:000001">
    <property type="entry name" value="Photosystem II CP47 reaction center protein"/>
    <property type="match status" value="1"/>
</dbReference>
<dbReference type="Gene3D" id="3.10.680.10">
    <property type="entry name" value="Photosystem II CP47 reaction center protein"/>
    <property type="match status" value="1"/>
</dbReference>
<dbReference type="HAMAP" id="MF_01495">
    <property type="entry name" value="PSII_PsbB_CP47"/>
    <property type="match status" value="1"/>
</dbReference>
<dbReference type="InterPro" id="IPR000932">
    <property type="entry name" value="PS_antenna-like"/>
</dbReference>
<dbReference type="InterPro" id="IPR036001">
    <property type="entry name" value="PS_II_antenna-like_sf"/>
</dbReference>
<dbReference type="InterPro" id="IPR017486">
    <property type="entry name" value="PSII_PsbB"/>
</dbReference>
<dbReference type="NCBIfam" id="TIGR03039">
    <property type="entry name" value="PS_II_CP47"/>
    <property type="match status" value="1"/>
</dbReference>
<dbReference type="PANTHER" id="PTHR33180">
    <property type="entry name" value="PHOTOSYSTEM II CP43 REACTION CENTER PROTEIN"/>
    <property type="match status" value="1"/>
</dbReference>
<dbReference type="PANTHER" id="PTHR33180:SF35">
    <property type="entry name" value="PHOTOSYSTEM II CP47 REACTION CENTER PROTEIN"/>
    <property type="match status" value="1"/>
</dbReference>
<dbReference type="Pfam" id="PF00421">
    <property type="entry name" value="PSII"/>
    <property type="match status" value="1"/>
</dbReference>
<dbReference type="SUPFAM" id="SSF161077">
    <property type="entry name" value="Photosystem II antenna protein-like"/>
    <property type="match status" value="1"/>
</dbReference>
<organism>
    <name type="scientific">Acorus calamus var. americanus</name>
    <name type="common">American sweet flag</name>
    <name type="synonym">Acorus americanus</name>
    <dbReference type="NCBI Taxonomy" id="263995"/>
    <lineage>
        <taxon>Eukaryota</taxon>
        <taxon>Viridiplantae</taxon>
        <taxon>Streptophyta</taxon>
        <taxon>Embryophyta</taxon>
        <taxon>Tracheophyta</taxon>
        <taxon>Spermatophyta</taxon>
        <taxon>Magnoliopsida</taxon>
        <taxon>Liliopsida</taxon>
        <taxon>Acoraceae</taxon>
        <taxon>Acorus</taxon>
    </lineage>
</organism>
<evidence type="ECO:0000255" key="1">
    <source>
        <dbReference type="HAMAP-Rule" id="MF_01495"/>
    </source>
</evidence>
<accession>A9LYC6</accession>
<protein>
    <recommendedName>
        <fullName evidence="1">Photosystem II CP47 reaction center protein</fullName>
    </recommendedName>
    <alternativeName>
        <fullName evidence="1">PSII 47 kDa protein</fullName>
    </alternativeName>
    <alternativeName>
        <fullName evidence="1">Protein CP-47</fullName>
    </alternativeName>
</protein>